<feature type="chain" id="PRO_0000197531" description="Integrase/recombinase">
    <location>
        <begin position="1"/>
        <end position="337"/>
    </location>
</feature>
<feature type="domain" description="Core-binding (CB)" evidence="2">
    <location>
        <begin position="14"/>
        <end position="94"/>
    </location>
</feature>
<feature type="domain" description="Tyr recombinase" evidence="1">
    <location>
        <begin position="112"/>
        <end position="328"/>
    </location>
</feature>
<feature type="active site" evidence="1">
    <location>
        <position position="146"/>
    </location>
</feature>
<feature type="active site" evidence="1">
    <location>
        <position position="171"/>
    </location>
</feature>
<feature type="active site" evidence="1">
    <location>
        <position position="277"/>
    </location>
</feature>
<feature type="active site" evidence="1">
    <location>
        <position position="280"/>
    </location>
</feature>
<feature type="active site" evidence="1">
    <location>
        <position position="303"/>
    </location>
</feature>
<feature type="active site" description="O-(3'-phospho-DNA)-tyrosine intermediate" evidence="1">
    <location>
        <position position="312"/>
    </location>
</feature>
<feature type="sequence variant" description="In plasmid R1033.">
    <original>H</original>
    <variation>N</variation>
    <location>
        <position position="39"/>
    </location>
</feature>
<feature type="sequence variant" description="In plasmid R1033.">
    <original>S</original>
    <variation>T</variation>
    <location>
        <position position="187"/>
    </location>
</feature>
<keyword id="KW-0229">DNA integration</keyword>
<keyword id="KW-0233">DNA recombination</keyword>
<keyword id="KW-0238">DNA-binding</keyword>
<keyword id="KW-0614">Plasmid</keyword>
<keyword id="KW-0814">Transposable element</keyword>
<keyword id="KW-1179">Viral genome integration</keyword>
<keyword id="KW-1160">Virus entry into host cell</keyword>
<organism>
    <name type="scientific">Pseudomonas aeruginosa</name>
    <dbReference type="NCBI Taxonomy" id="287"/>
    <lineage>
        <taxon>Bacteria</taxon>
        <taxon>Pseudomonadati</taxon>
        <taxon>Pseudomonadota</taxon>
        <taxon>Gammaproteobacteria</taxon>
        <taxon>Pseudomonadales</taxon>
        <taxon>Pseudomonadaceae</taxon>
        <taxon>Pseudomonas</taxon>
    </lineage>
</organism>
<sequence length="337" mass="38381">MKTATAPLPPLRSVKVLDQLRERIRYLHYSLRTEQAYVHWVRAFIRFHGVRHPATLGSSEVEAFLSWLANERKVSVSTHRQALAALLFFYGKVLCTDLPWLQEIGRPRPSRRLPVVLTPDEVVRILGFLEGEHRLFAQLLYGTGMRISEGLQLRVKDLDFDHGTIIVREGKGSKDRALMLPESLAPSLREQLSRARAWWLKDQAEGRSGVALPDALERKYPRAGHSWPWFWVFAQHTHSTDPRSGVVRRHHMYDQTFQRAFKRAVEQAGITKPATPHTLRHSFATALLRSGYDIRTVQDLLGHSDVSTTMIYTHVLKVGGAGVRSPLDALPPLTSER</sequence>
<proteinExistence type="inferred from homology"/>
<geneLocation type="plasmid">
    <name>R1033</name>
</geneLocation>
<geneLocation type="plasmid">
    <name>pVS1</name>
</geneLocation>
<accession>P62591</accession>
<accession>P09999</accession>
<accession>P11743</accession>
<gene>
    <name type="primary">int</name>
</gene>
<protein>
    <recommendedName>
        <fullName>Integrase/recombinase</fullName>
    </recommendedName>
    <alternativeName>
        <fullName>E2 protein</fullName>
    </alternativeName>
</protein>
<reference key="1">
    <citation type="journal article" date="1989" name="Mol. Gen. Genet.">
        <title>On the evolution of Tn21-like multiresistance transposons: sequence analysis of the gene (aacC1) for gentamicin acetyltransferase-3-I(AAC(3)-I), another member of the Tn21-based expression cassette.</title>
        <authorList>
            <person name="Wohlleben W."/>
            <person name="Arnold W."/>
            <person name="Bissonnette L."/>
            <person name="Pelletier A."/>
            <person name="Tanguay A."/>
            <person name="Roy P.H."/>
            <person name="Gamboa G.C."/>
            <person name="Barry G.F."/>
            <person name="Aubert E."/>
            <person name="Davies J."/>
            <person name="Kagan S.A."/>
        </authorList>
    </citation>
    <scope>NUCLEOTIDE SEQUENCE [GENOMIC DNA]</scope>
    <source>
        <plasmid>R1033</plasmid>
        <transposon>Tn1696</transposon>
    </source>
</reference>
<reference key="2">
    <citation type="journal article" date="1992" name="J. Bacteriol.">
        <title>Characterization of In0 of Pseudomonas aeruginosa plasmid pVS1, an ancestor of integrons of multiresistance plasmids and transposons of Gram-negative bacteria.</title>
        <authorList>
            <person name="Bissonnette L."/>
            <person name="Roy P.H."/>
        </authorList>
    </citation>
    <scope>NUCLEOTIDE SEQUENCE [GENOMIC DNA]</scope>
    <source>
        <plasmid>pVS1</plasmid>
    </source>
</reference>
<evidence type="ECO:0000255" key="1">
    <source>
        <dbReference type="PROSITE-ProRule" id="PRU01246"/>
    </source>
</evidence>
<evidence type="ECO:0000255" key="2">
    <source>
        <dbReference type="PROSITE-ProRule" id="PRU01248"/>
    </source>
</evidence>
<evidence type="ECO:0000305" key="3"/>
<dbReference type="EMBL" id="U12338">
    <property type="protein sequence ID" value="AAB59999.1"/>
    <property type="molecule type" value="Genomic_DNA"/>
</dbReference>
<dbReference type="EMBL" id="X15852">
    <property type="protein sequence ID" value="CAA33849.1"/>
    <property type="molecule type" value="Genomic_DNA"/>
</dbReference>
<dbReference type="EMBL" id="U49101">
    <property type="protein sequence ID" value="AAC44315.1"/>
    <property type="molecule type" value="Genomic_DNA"/>
</dbReference>
<dbReference type="EMBL" id="M73819">
    <property type="protein sequence ID" value="AAA25857.1"/>
    <property type="molecule type" value="Genomic_DNA"/>
</dbReference>
<dbReference type="PIR" id="A42646">
    <property type="entry name" value="A42646"/>
</dbReference>
<dbReference type="PIR" id="JQ0300">
    <property type="entry name" value="JQ0300"/>
</dbReference>
<dbReference type="RefSeq" id="YP_001427371.1">
    <property type="nucleotide sequence ID" value="NC_009739.1"/>
</dbReference>
<dbReference type="RefSeq" id="YP_245442.1">
    <property type="nucleotide sequence ID" value="NC_007100.1"/>
</dbReference>
<dbReference type="SMR" id="P62591"/>
<dbReference type="GO" id="GO:0003677">
    <property type="term" value="F:DNA binding"/>
    <property type="evidence" value="ECO:0007669"/>
    <property type="project" value="UniProtKB-KW"/>
</dbReference>
<dbReference type="GO" id="GO:0015074">
    <property type="term" value="P:DNA integration"/>
    <property type="evidence" value="ECO:0007669"/>
    <property type="project" value="UniProtKB-KW"/>
</dbReference>
<dbReference type="GO" id="GO:0006310">
    <property type="term" value="P:DNA recombination"/>
    <property type="evidence" value="ECO:0007669"/>
    <property type="project" value="UniProtKB-KW"/>
</dbReference>
<dbReference type="GO" id="GO:0075713">
    <property type="term" value="P:establishment of integrated proviral latency"/>
    <property type="evidence" value="ECO:0007669"/>
    <property type="project" value="UniProtKB-KW"/>
</dbReference>
<dbReference type="GO" id="GO:0046718">
    <property type="term" value="P:symbiont entry into host cell"/>
    <property type="evidence" value="ECO:0007669"/>
    <property type="project" value="UniProtKB-KW"/>
</dbReference>
<dbReference type="GO" id="GO:0044826">
    <property type="term" value="P:viral genome integration into host DNA"/>
    <property type="evidence" value="ECO:0007669"/>
    <property type="project" value="UniProtKB-KW"/>
</dbReference>
<dbReference type="CDD" id="cd01193">
    <property type="entry name" value="INT_IntI_C"/>
    <property type="match status" value="1"/>
</dbReference>
<dbReference type="Gene3D" id="1.10.150.130">
    <property type="match status" value="1"/>
</dbReference>
<dbReference type="Gene3D" id="1.10.443.10">
    <property type="entry name" value="Intergrase catalytic core"/>
    <property type="match status" value="1"/>
</dbReference>
<dbReference type="InterPro" id="IPR044068">
    <property type="entry name" value="CB"/>
</dbReference>
<dbReference type="InterPro" id="IPR011010">
    <property type="entry name" value="DNA_brk_join_enz"/>
</dbReference>
<dbReference type="InterPro" id="IPR013762">
    <property type="entry name" value="Integrase-like_cat_sf"/>
</dbReference>
<dbReference type="InterPro" id="IPR002104">
    <property type="entry name" value="Integrase_catalytic"/>
</dbReference>
<dbReference type="InterPro" id="IPR011946">
    <property type="entry name" value="Integrase_integron-type"/>
</dbReference>
<dbReference type="InterPro" id="IPR010998">
    <property type="entry name" value="Integrase_recombinase_N"/>
</dbReference>
<dbReference type="InterPro" id="IPR004107">
    <property type="entry name" value="Integrase_SAM-like_N"/>
</dbReference>
<dbReference type="InterPro" id="IPR050090">
    <property type="entry name" value="Tyrosine_recombinase_XerCD"/>
</dbReference>
<dbReference type="NCBIfam" id="TIGR02249">
    <property type="entry name" value="integrase_gron"/>
    <property type="match status" value="1"/>
</dbReference>
<dbReference type="NCBIfam" id="NF011946">
    <property type="entry name" value="PRK15417.1"/>
    <property type="match status" value="1"/>
</dbReference>
<dbReference type="PANTHER" id="PTHR30349">
    <property type="entry name" value="PHAGE INTEGRASE-RELATED"/>
    <property type="match status" value="1"/>
</dbReference>
<dbReference type="PANTHER" id="PTHR30349:SF64">
    <property type="entry name" value="PROPHAGE INTEGRASE INTD-RELATED"/>
    <property type="match status" value="1"/>
</dbReference>
<dbReference type="Pfam" id="PF13495">
    <property type="entry name" value="Phage_int_SAM_4"/>
    <property type="match status" value="1"/>
</dbReference>
<dbReference type="Pfam" id="PF00589">
    <property type="entry name" value="Phage_integrase"/>
    <property type="match status" value="1"/>
</dbReference>
<dbReference type="SUPFAM" id="SSF56349">
    <property type="entry name" value="DNA breaking-rejoining enzymes"/>
    <property type="match status" value="1"/>
</dbReference>
<dbReference type="PROSITE" id="PS51900">
    <property type="entry name" value="CB"/>
    <property type="match status" value="1"/>
</dbReference>
<dbReference type="PROSITE" id="PS51898">
    <property type="entry name" value="TYR_RECOMBINASE"/>
    <property type="match status" value="1"/>
</dbReference>
<comment type="function">
    <text>Putative integrase believed to be involved in the insertion of antibiotic resistance genes into plasmids and transposons.</text>
</comment>
<comment type="similarity">
    <text evidence="3">Belongs to the 'phage' integrase family.</text>
</comment>
<name>INT2_PSEAI</name>